<gene>
    <name evidence="1" type="primary">rpsG</name>
    <name type="ordered locus">SPC_3516</name>
</gene>
<proteinExistence type="inferred from homology"/>
<evidence type="ECO:0000255" key="1">
    <source>
        <dbReference type="HAMAP-Rule" id="MF_00480"/>
    </source>
</evidence>
<evidence type="ECO:0000305" key="2"/>
<keyword id="KW-0687">Ribonucleoprotein</keyword>
<keyword id="KW-0689">Ribosomal protein</keyword>
<keyword id="KW-0694">RNA-binding</keyword>
<keyword id="KW-0699">rRNA-binding</keyword>
<keyword id="KW-0820">tRNA-binding</keyword>
<organism>
    <name type="scientific">Salmonella paratyphi C (strain RKS4594)</name>
    <dbReference type="NCBI Taxonomy" id="476213"/>
    <lineage>
        <taxon>Bacteria</taxon>
        <taxon>Pseudomonadati</taxon>
        <taxon>Pseudomonadota</taxon>
        <taxon>Gammaproteobacteria</taxon>
        <taxon>Enterobacterales</taxon>
        <taxon>Enterobacteriaceae</taxon>
        <taxon>Salmonella</taxon>
    </lineage>
</organism>
<reference key="1">
    <citation type="journal article" date="2009" name="PLoS ONE">
        <title>Salmonella paratyphi C: genetic divergence from Salmonella choleraesuis and pathogenic convergence with Salmonella typhi.</title>
        <authorList>
            <person name="Liu W.-Q."/>
            <person name="Feng Y."/>
            <person name="Wang Y."/>
            <person name="Zou Q.-H."/>
            <person name="Chen F."/>
            <person name="Guo J.-T."/>
            <person name="Peng Y.-H."/>
            <person name="Jin Y."/>
            <person name="Li Y.-G."/>
            <person name="Hu S.-N."/>
            <person name="Johnston R.N."/>
            <person name="Liu G.-R."/>
            <person name="Liu S.-L."/>
        </authorList>
    </citation>
    <scope>NUCLEOTIDE SEQUENCE [LARGE SCALE GENOMIC DNA]</scope>
    <source>
        <strain>RKS4594</strain>
    </source>
</reference>
<accession>C0Q0C3</accession>
<protein>
    <recommendedName>
        <fullName evidence="1">Small ribosomal subunit protein uS7</fullName>
    </recommendedName>
    <alternativeName>
        <fullName evidence="2">30S ribosomal protein S7</fullName>
    </alternativeName>
</protein>
<dbReference type="EMBL" id="CP000857">
    <property type="protein sequence ID" value="ACN47600.1"/>
    <property type="molecule type" value="Genomic_DNA"/>
</dbReference>
<dbReference type="RefSeq" id="WP_001138042.1">
    <property type="nucleotide sequence ID" value="NC_012125.1"/>
</dbReference>
<dbReference type="SMR" id="C0Q0C3"/>
<dbReference type="GeneID" id="92804583"/>
<dbReference type="KEGG" id="sei:SPC_3516"/>
<dbReference type="HOGENOM" id="CLU_072226_1_1_6"/>
<dbReference type="Proteomes" id="UP000001599">
    <property type="component" value="Chromosome"/>
</dbReference>
<dbReference type="GO" id="GO:0015935">
    <property type="term" value="C:small ribosomal subunit"/>
    <property type="evidence" value="ECO:0007669"/>
    <property type="project" value="InterPro"/>
</dbReference>
<dbReference type="GO" id="GO:0019843">
    <property type="term" value="F:rRNA binding"/>
    <property type="evidence" value="ECO:0007669"/>
    <property type="project" value="UniProtKB-UniRule"/>
</dbReference>
<dbReference type="GO" id="GO:0003735">
    <property type="term" value="F:structural constituent of ribosome"/>
    <property type="evidence" value="ECO:0007669"/>
    <property type="project" value="InterPro"/>
</dbReference>
<dbReference type="GO" id="GO:0000049">
    <property type="term" value="F:tRNA binding"/>
    <property type="evidence" value="ECO:0007669"/>
    <property type="project" value="UniProtKB-UniRule"/>
</dbReference>
<dbReference type="GO" id="GO:0006412">
    <property type="term" value="P:translation"/>
    <property type="evidence" value="ECO:0007669"/>
    <property type="project" value="UniProtKB-UniRule"/>
</dbReference>
<dbReference type="CDD" id="cd14869">
    <property type="entry name" value="uS7_Bacteria"/>
    <property type="match status" value="1"/>
</dbReference>
<dbReference type="FunFam" id="1.10.455.10:FF:000001">
    <property type="entry name" value="30S ribosomal protein S7"/>
    <property type="match status" value="1"/>
</dbReference>
<dbReference type="Gene3D" id="1.10.455.10">
    <property type="entry name" value="Ribosomal protein S7 domain"/>
    <property type="match status" value="1"/>
</dbReference>
<dbReference type="HAMAP" id="MF_00480_B">
    <property type="entry name" value="Ribosomal_uS7_B"/>
    <property type="match status" value="1"/>
</dbReference>
<dbReference type="InterPro" id="IPR000235">
    <property type="entry name" value="Ribosomal_uS7"/>
</dbReference>
<dbReference type="InterPro" id="IPR005717">
    <property type="entry name" value="Ribosomal_uS7_bac/org-type"/>
</dbReference>
<dbReference type="InterPro" id="IPR020606">
    <property type="entry name" value="Ribosomal_uS7_CS"/>
</dbReference>
<dbReference type="InterPro" id="IPR023798">
    <property type="entry name" value="Ribosomal_uS7_dom"/>
</dbReference>
<dbReference type="InterPro" id="IPR036823">
    <property type="entry name" value="Ribosomal_uS7_dom_sf"/>
</dbReference>
<dbReference type="NCBIfam" id="TIGR01029">
    <property type="entry name" value="rpsG_bact"/>
    <property type="match status" value="1"/>
</dbReference>
<dbReference type="PANTHER" id="PTHR11205">
    <property type="entry name" value="RIBOSOMAL PROTEIN S7"/>
    <property type="match status" value="1"/>
</dbReference>
<dbReference type="Pfam" id="PF00177">
    <property type="entry name" value="Ribosomal_S7"/>
    <property type="match status" value="1"/>
</dbReference>
<dbReference type="PIRSF" id="PIRSF002122">
    <property type="entry name" value="RPS7p_RPS7a_RPS5e_RPS7o"/>
    <property type="match status" value="1"/>
</dbReference>
<dbReference type="SUPFAM" id="SSF47973">
    <property type="entry name" value="Ribosomal protein S7"/>
    <property type="match status" value="1"/>
</dbReference>
<dbReference type="PROSITE" id="PS00052">
    <property type="entry name" value="RIBOSOMAL_S7"/>
    <property type="match status" value="1"/>
</dbReference>
<comment type="function">
    <text evidence="1">One of the primary rRNA binding proteins, it binds directly to 16S rRNA where it nucleates assembly of the head domain of the 30S subunit. Is located at the subunit interface close to the decoding center, probably blocks exit of the E-site tRNA.</text>
</comment>
<comment type="subunit">
    <text evidence="1">Part of the 30S ribosomal subunit. Contacts proteins S9 and S11.</text>
</comment>
<comment type="similarity">
    <text evidence="1">Belongs to the universal ribosomal protein uS7 family.</text>
</comment>
<feature type="chain" id="PRO_1000135621" description="Small ribosomal subunit protein uS7">
    <location>
        <begin position="1"/>
        <end position="156"/>
    </location>
</feature>
<sequence>MPRRRVIGQRKILPDPKFGSELLAKFVNILMVDGKKSTAESIVYSALETLAQRSGKSELEAFEVALENVRPTVEVKSRRVGGSTYQVPVEVRPVRRNALAMRWIVEAARKRGDKSMALRLANELSDAADNKGTAVKKREDVHRMAEANKAFAHYRW</sequence>
<name>RS7_SALPC</name>